<feature type="chain" id="PRO_0000112790" description="Ornithine aminotransferase 1">
    <location>
        <begin position="1"/>
        <end position="394"/>
    </location>
</feature>
<feature type="modified residue" description="N6-(pyridoxal phosphate)lysine" evidence="1">
    <location>
        <position position="252"/>
    </location>
</feature>
<keyword id="KW-0028">Amino-acid biosynthesis</keyword>
<keyword id="KW-0032">Aminotransferase</keyword>
<keyword id="KW-0963">Cytoplasm</keyword>
<keyword id="KW-0641">Proline biosynthesis</keyword>
<keyword id="KW-0663">Pyridoxal phosphate</keyword>
<keyword id="KW-0808">Transferase</keyword>
<dbReference type="EC" id="2.6.1.13" evidence="1"/>
<dbReference type="EMBL" id="BA000033">
    <property type="protein sequence ID" value="BAB94024.1"/>
    <property type="molecule type" value="Genomic_DNA"/>
</dbReference>
<dbReference type="SMR" id="Q8NYM5"/>
<dbReference type="KEGG" id="sam:MW0159"/>
<dbReference type="HOGENOM" id="CLU_016922_10_1_9"/>
<dbReference type="UniPathway" id="UPA00098">
    <property type="reaction ID" value="UER00358"/>
</dbReference>
<dbReference type="GO" id="GO:0005737">
    <property type="term" value="C:cytoplasm"/>
    <property type="evidence" value="ECO:0007669"/>
    <property type="project" value="UniProtKB-SubCell"/>
</dbReference>
<dbReference type="GO" id="GO:0042802">
    <property type="term" value="F:identical protein binding"/>
    <property type="evidence" value="ECO:0007669"/>
    <property type="project" value="TreeGrafter"/>
</dbReference>
<dbReference type="GO" id="GO:0004587">
    <property type="term" value="F:ornithine aminotransferase activity"/>
    <property type="evidence" value="ECO:0007669"/>
    <property type="project" value="UniProtKB-UniRule"/>
</dbReference>
<dbReference type="GO" id="GO:0030170">
    <property type="term" value="F:pyridoxal phosphate binding"/>
    <property type="evidence" value="ECO:0007669"/>
    <property type="project" value="UniProtKB-UniRule"/>
</dbReference>
<dbReference type="GO" id="GO:0006525">
    <property type="term" value="P:arginine metabolic process"/>
    <property type="evidence" value="ECO:0007669"/>
    <property type="project" value="InterPro"/>
</dbReference>
<dbReference type="GO" id="GO:0055129">
    <property type="term" value="P:L-proline biosynthetic process"/>
    <property type="evidence" value="ECO:0007669"/>
    <property type="project" value="UniProtKB-UniRule"/>
</dbReference>
<dbReference type="CDD" id="cd00610">
    <property type="entry name" value="OAT_like"/>
    <property type="match status" value="1"/>
</dbReference>
<dbReference type="FunFam" id="3.40.640.10:FF:000011">
    <property type="entry name" value="Ornithine aminotransferase"/>
    <property type="match status" value="1"/>
</dbReference>
<dbReference type="Gene3D" id="3.90.1150.10">
    <property type="entry name" value="Aspartate Aminotransferase, domain 1"/>
    <property type="match status" value="1"/>
</dbReference>
<dbReference type="Gene3D" id="3.40.640.10">
    <property type="entry name" value="Type I PLP-dependent aspartate aminotransferase-like (Major domain)"/>
    <property type="match status" value="1"/>
</dbReference>
<dbReference type="HAMAP" id="MF_01689">
    <property type="entry name" value="Ornith_aminotrans_3"/>
    <property type="match status" value="1"/>
</dbReference>
<dbReference type="InterPro" id="IPR004636">
    <property type="entry name" value="AcOrn/SuccOrn_fam"/>
</dbReference>
<dbReference type="InterPro" id="IPR005814">
    <property type="entry name" value="Aminotrans_3"/>
</dbReference>
<dbReference type="InterPro" id="IPR049704">
    <property type="entry name" value="Aminotrans_3_PPA_site"/>
</dbReference>
<dbReference type="InterPro" id="IPR050103">
    <property type="entry name" value="Class-III_PLP-dep_AT"/>
</dbReference>
<dbReference type="InterPro" id="IPR010164">
    <property type="entry name" value="Orn_aminotrans"/>
</dbReference>
<dbReference type="InterPro" id="IPR034757">
    <property type="entry name" value="Ornith_aminotrans_bact"/>
</dbReference>
<dbReference type="InterPro" id="IPR015424">
    <property type="entry name" value="PyrdxlP-dep_Trfase"/>
</dbReference>
<dbReference type="InterPro" id="IPR015421">
    <property type="entry name" value="PyrdxlP-dep_Trfase_major"/>
</dbReference>
<dbReference type="InterPro" id="IPR015422">
    <property type="entry name" value="PyrdxlP-dep_Trfase_small"/>
</dbReference>
<dbReference type="NCBIfam" id="TIGR00707">
    <property type="entry name" value="argD"/>
    <property type="match status" value="1"/>
</dbReference>
<dbReference type="NCBIfam" id="TIGR01885">
    <property type="entry name" value="Orn_aminotrans"/>
    <property type="match status" value="1"/>
</dbReference>
<dbReference type="NCBIfam" id="NF002325">
    <property type="entry name" value="PRK01278.1"/>
    <property type="match status" value="1"/>
</dbReference>
<dbReference type="PANTHER" id="PTHR11986">
    <property type="entry name" value="AMINOTRANSFERASE CLASS III"/>
    <property type="match status" value="1"/>
</dbReference>
<dbReference type="PANTHER" id="PTHR11986:SF18">
    <property type="entry name" value="ORNITHINE AMINOTRANSFERASE, MITOCHONDRIAL"/>
    <property type="match status" value="1"/>
</dbReference>
<dbReference type="Pfam" id="PF00202">
    <property type="entry name" value="Aminotran_3"/>
    <property type="match status" value="1"/>
</dbReference>
<dbReference type="PIRSF" id="PIRSF000521">
    <property type="entry name" value="Transaminase_4ab_Lys_Orn"/>
    <property type="match status" value="1"/>
</dbReference>
<dbReference type="SUPFAM" id="SSF53383">
    <property type="entry name" value="PLP-dependent transferases"/>
    <property type="match status" value="1"/>
</dbReference>
<dbReference type="PROSITE" id="PS00600">
    <property type="entry name" value="AA_TRANSFER_CLASS_3"/>
    <property type="match status" value="1"/>
</dbReference>
<accession>Q8NYM5</accession>
<proteinExistence type="inferred from homology"/>
<protein>
    <recommendedName>
        <fullName evidence="1">Ornithine aminotransferase 1</fullName>
        <shortName evidence="1">OAT 1</shortName>
        <ecNumber evidence="1">2.6.1.13</ecNumber>
    </recommendedName>
    <alternativeName>
        <fullName evidence="1">Ornithine--oxo-acid aminotransferase 1</fullName>
    </alternativeName>
</protein>
<gene>
    <name evidence="1" type="primary">rocD1</name>
    <name type="ordered locus">MW0159</name>
</gene>
<evidence type="ECO:0000255" key="1">
    <source>
        <dbReference type="HAMAP-Rule" id="MF_01689"/>
    </source>
</evidence>
<name>OAT1_STAAW</name>
<organism>
    <name type="scientific">Staphylococcus aureus (strain MW2)</name>
    <dbReference type="NCBI Taxonomy" id="196620"/>
    <lineage>
        <taxon>Bacteria</taxon>
        <taxon>Bacillati</taxon>
        <taxon>Bacillota</taxon>
        <taxon>Bacilli</taxon>
        <taxon>Bacillales</taxon>
        <taxon>Staphylococcaceae</taxon>
        <taxon>Staphylococcus</taxon>
    </lineage>
</organism>
<comment type="function">
    <text evidence="1">Catalyzes the interconversion of ornithine to glutamate semialdehyde.</text>
</comment>
<comment type="catalytic activity">
    <reaction evidence="1">
        <text>a 2-oxocarboxylate + L-ornithine = L-glutamate 5-semialdehyde + an L-alpha-amino acid</text>
        <dbReference type="Rhea" id="RHEA:13877"/>
        <dbReference type="ChEBI" id="CHEBI:35179"/>
        <dbReference type="ChEBI" id="CHEBI:46911"/>
        <dbReference type="ChEBI" id="CHEBI:58066"/>
        <dbReference type="ChEBI" id="CHEBI:59869"/>
        <dbReference type="EC" id="2.6.1.13"/>
    </reaction>
</comment>
<comment type="cofactor">
    <cofactor evidence="1">
        <name>pyridoxal 5'-phosphate</name>
        <dbReference type="ChEBI" id="CHEBI:597326"/>
    </cofactor>
</comment>
<comment type="pathway">
    <text evidence="1">Amino-acid biosynthesis; L-proline biosynthesis; L-glutamate 5-semialdehyde from L-ornithine: step 1/1.</text>
</comment>
<comment type="subcellular location">
    <subcellularLocation>
        <location evidence="1">Cytoplasm</location>
    </subcellularLocation>
</comment>
<comment type="similarity">
    <text evidence="1">Belongs to the class-III pyridoxal-phosphate-dependent aminotransferase family. OAT subfamily.</text>
</comment>
<reference key="1">
    <citation type="journal article" date="2002" name="Lancet">
        <title>Genome and virulence determinants of high virulence community-acquired MRSA.</title>
        <authorList>
            <person name="Baba T."/>
            <person name="Takeuchi F."/>
            <person name="Kuroda M."/>
            <person name="Yuzawa H."/>
            <person name="Aoki K."/>
            <person name="Oguchi A."/>
            <person name="Nagai Y."/>
            <person name="Iwama N."/>
            <person name="Asano K."/>
            <person name="Naimi T."/>
            <person name="Kuroda H."/>
            <person name="Cui L."/>
            <person name="Yamamoto K."/>
            <person name="Hiramatsu K."/>
        </authorList>
    </citation>
    <scope>NUCLEOTIDE SEQUENCE [LARGE SCALE GENOMIC DNA]</scope>
    <source>
        <strain>MW2</strain>
    </source>
</reference>
<sequence length="394" mass="43049">MNSIIELTDYYSSNNYAPLKLVISKGKGVKVWDTDGKQYIDCISGFSVANQGHCHPTIVKAMTEQASKLSIISRVLYSDNLGKWEEKICHLAKKDKVLPLNSGTEAVEAAIKIARKWGSEVKGITDGQVEIIAMNNNFHGRTLGSLSLSNHDAYKAGFHPLLQGTTTVDFGDIEQLTQAISPNTAAIILEPIQGEGGVNIPPKGYIQAVRQLCDKHQILLIADEIQVGLGRTGKWFAMEWEQVVPDIYILGKALGGGLYPVSAVLANNDVMRVLTPGTHGSTFGGNPLAIAISTAALDVLKDEQLVERSERLGSFLLKALLQLKHPSIKEIRGRGLFIGIELNTDAAPFVDQLIQRGILCKDTHRTIIRLSPPLVIDKEEIHQIVAAFQDVFKN</sequence>